<accession>Q8A102</accession>
<dbReference type="EMBL" id="AE015928">
    <property type="protein sequence ID" value="AAO78974.1"/>
    <property type="molecule type" value="Genomic_DNA"/>
</dbReference>
<dbReference type="RefSeq" id="NP_812780.1">
    <property type="nucleotide sequence ID" value="NC_004663.1"/>
</dbReference>
<dbReference type="RefSeq" id="WP_011109003.1">
    <property type="nucleotide sequence ID" value="NC_004663.1"/>
</dbReference>
<dbReference type="SMR" id="Q8A102"/>
<dbReference type="FunCoup" id="Q8A102">
    <property type="interactions" value="64"/>
</dbReference>
<dbReference type="STRING" id="226186.BT_3869"/>
<dbReference type="PaxDb" id="226186-BT_3869"/>
<dbReference type="EnsemblBacteria" id="AAO78974">
    <property type="protein sequence ID" value="AAO78974"/>
    <property type="gene ID" value="BT_3869"/>
</dbReference>
<dbReference type="GeneID" id="60925042"/>
<dbReference type="KEGG" id="bth:BT_3869"/>
<dbReference type="PATRIC" id="fig|226186.12.peg.3931"/>
<dbReference type="eggNOG" id="COG3022">
    <property type="taxonomic scope" value="Bacteria"/>
</dbReference>
<dbReference type="HOGENOM" id="CLU_061989_0_1_10"/>
<dbReference type="InParanoid" id="Q8A102"/>
<dbReference type="OrthoDB" id="9777133at2"/>
<dbReference type="Proteomes" id="UP000001414">
    <property type="component" value="Chromosome"/>
</dbReference>
<dbReference type="GO" id="GO:0005829">
    <property type="term" value="C:cytosol"/>
    <property type="evidence" value="ECO:0000318"/>
    <property type="project" value="GO_Central"/>
</dbReference>
<dbReference type="GO" id="GO:0033194">
    <property type="term" value="P:response to hydroperoxide"/>
    <property type="evidence" value="ECO:0000318"/>
    <property type="project" value="GO_Central"/>
</dbReference>
<dbReference type="HAMAP" id="MF_00652">
    <property type="entry name" value="UPF0246"/>
    <property type="match status" value="1"/>
</dbReference>
<dbReference type="InterPro" id="IPR005583">
    <property type="entry name" value="YaaA"/>
</dbReference>
<dbReference type="NCBIfam" id="NF002547">
    <property type="entry name" value="PRK02101.2-5"/>
    <property type="match status" value="1"/>
</dbReference>
<dbReference type="PANTHER" id="PTHR30283:SF4">
    <property type="entry name" value="PEROXIDE STRESS RESISTANCE PROTEIN YAAA"/>
    <property type="match status" value="1"/>
</dbReference>
<dbReference type="PANTHER" id="PTHR30283">
    <property type="entry name" value="PEROXIDE STRESS RESPONSE PROTEIN YAAA"/>
    <property type="match status" value="1"/>
</dbReference>
<dbReference type="Pfam" id="PF03883">
    <property type="entry name" value="H2O2_YaaD"/>
    <property type="match status" value="1"/>
</dbReference>
<proteinExistence type="inferred from homology"/>
<feature type="chain" id="PRO_0000203974" description="UPF0246 protein BT_3869">
    <location>
        <begin position="1"/>
        <end position="257"/>
    </location>
</feature>
<sequence>MLVLLSCAKTMSAVSKVKVPLTTSPRFQKEAAEIALQMSQFSVDELERLLRVNAKIAVENYKRYQAFHAETTPELPALLAYTGIVFKRLNPKDFSAEDFGYAQEHLRLTSFCYGLLRPLDVIRAYRLEGDVVLPELGNQTLFSYWRSRLTDTFIEDIRSAGGILCNLASDEMKSLFDWKRVESEVRVVTPEFHVWKNGKLATIVVYTKMSRGEMTRFILKNKIGTPEELKGFSWEGFEFDESLSDERKLVFINGMGE</sequence>
<protein>
    <recommendedName>
        <fullName evidence="1">UPF0246 protein BT_3869</fullName>
    </recommendedName>
</protein>
<organism>
    <name type="scientific">Bacteroides thetaiotaomicron (strain ATCC 29148 / DSM 2079 / JCM 5827 / CCUG 10774 / NCTC 10582 / VPI-5482 / E50)</name>
    <dbReference type="NCBI Taxonomy" id="226186"/>
    <lineage>
        <taxon>Bacteria</taxon>
        <taxon>Pseudomonadati</taxon>
        <taxon>Bacteroidota</taxon>
        <taxon>Bacteroidia</taxon>
        <taxon>Bacteroidales</taxon>
        <taxon>Bacteroidaceae</taxon>
        <taxon>Bacteroides</taxon>
    </lineage>
</organism>
<evidence type="ECO:0000255" key="1">
    <source>
        <dbReference type="HAMAP-Rule" id="MF_00652"/>
    </source>
</evidence>
<reference key="1">
    <citation type="journal article" date="2003" name="Science">
        <title>A genomic view of the human-Bacteroides thetaiotaomicron symbiosis.</title>
        <authorList>
            <person name="Xu J."/>
            <person name="Bjursell M.K."/>
            <person name="Himrod J."/>
            <person name="Deng S."/>
            <person name="Carmichael L.K."/>
            <person name="Chiang H.C."/>
            <person name="Hooper L.V."/>
            <person name="Gordon J.I."/>
        </authorList>
    </citation>
    <scope>NUCLEOTIDE SEQUENCE [LARGE SCALE GENOMIC DNA]</scope>
    <source>
        <strain>ATCC 29148 / DSM 2079 / JCM 5827 / CCUG 10774 / NCTC 10582 / VPI-5482 / E50</strain>
    </source>
</reference>
<comment type="similarity">
    <text evidence="1">Belongs to the UPF0246 family.</text>
</comment>
<gene>
    <name type="ordered locus">BT_3869</name>
</gene>
<keyword id="KW-1185">Reference proteome</keyword>
<name>Y3869_BACTN</name>